<feature type="chain" id="PRO_0000165244" description="Regulatory protein cox">
    <location>
        <begin position="1"/>
        <end position="91"/>
    </location>
</feature>
<feature type="strand" evidence="3">
    <location>
        <begin position="10"/>
        <end position="13"/>
    </location>
</feature>
<feature type="helix" evidence="3">
    <location>
        <begin position="14"/>
        <end position="21"/>
    </location>
</feature>
<feature type="helix" evidence="3">
    <location>
        <begin position="25"/>
        <end position="34"/>
    </location>
</feature>
<feature type="strand" evidence="3">
    <location>
        <begin position="39"/>
        <end position="42"/>
    </location>
</feature>
<feature type="strand" evidence="3">
    <location>
        <begin position="54"/>
        <end position="58"/>
    </location>
</feature>
<feature type="helix" evidence="3">
    <location>
        <begin position="59"/>
        <end position="72"/>
    </location>
</feature>
<feature type="helix" evidence="3">
    <location>
        <begin position="75"/>
        <end position="80"/>
    </location>
</feature>
<feature type="helix" evidence="3">
    <location>
        <begin position="81"/>
        <end position="85"/>
    </location>
</feature>
<organism>
    <name type="scientific">Escherichia phage P2</name>
    <name type="common">Bacteriophage P2</name>
    <dbReference type="NCBI Taxonomy" id="2905681"/>
    <lineage>
        <taxon>Viruses</taxon>
        <taxon>Duplodnaviria</taxon>
        <taxon>Heunggongvirae</taxon>
        <taxon>Uroviricota</taxon>
        <taxon>Caudoviricetes</taxon>
        <taxon>Peduoviridae</taxon>
        <taxon>Peduovirus</taxon>
        <taxon>Peduovirus P2</taxon>
    </lineage>
</organism>
<protein>
    <recommendedName>
        <fullName>Regulatory protein cox</fullName>
    </recommendedName>
</protein>
<evidence type="ECO:0000269" key="1">
    <source>
    </source>
</evidence>
<evidence type="ECO:0000305" key="2"/>
<evidence type="ECO:0007829" key="3">
    <source>
        <dbReference type="PDB" id="4LHF"/>
    </source>
</evidence>
<sequence>MSKQVTLMTDAIPYQEFAKLIGKSTGAVRRMIDKGKLPVIDMTDPQSASGRAGEYWVYLPAWNNGLKLAYESRPKEIRDGWLMWLGLGEPR</sequence>
<gene>
    <name type="primary">cox</name>
</gene>
<keyword id="KW-0002">3D-structure</keyword>
<keyword id="KW-0238">DNA-binding</keyword>
<keyword id="KW-0244">Early protein</keyword>
<keyword id="KW-1185">Reference proteome</keyword>
<keyword id="KW-0678">Repressor</keyword>
<keyword id="KW-0804">Transcription</keyword>
<keyword id="KW-0805">Transcription regulation</keyword>
<name>VCOX_BPP2</name>
<organismHost>
    <name type="scientific">Enterobacteriaceae</name>
    <dbReference type="NCBI Taxonomy" id="543"/>
</organismHost>
<comment type="function">
    <text evidence="1">Repressor of the Pc promoter which controls gene C, which codes for the immunity repressor, and int, whose product promotes the site-specific recombination over att.</text>
</comment>
<comment type="similarity">
    <text evidence="2">To phage HP1 cox.</text>
</comment>
<accession>P07695</accession>
<proteinExistence type="evidence at protein level"/>
<dbReference type="EMBL" id="AF063097">
    <property type="protein sequence ID" value="AAD03299.1"/>
    <property type="molecule type" value="Genomic_DNA"/>
</dbReference>
<dbReference type="PIR" id="S06351">
    <property type="entry name" value="S06351"/>
</dbReference>
<dbReference type="RefSeq" id="NP_046788.1">
    <property type="nucleotide sequence ID" value="NC_001895.1"/>
</dbReference>
<dbReference type="PDB" id="4LHF">
    <property type="method" value="X-ray"/>
    <property type="resolution" value="2.40 A"/>
    <property type="chains" value="A=1-91"/>
</dbReference>
<dbReference type="PDBsum" id="4LHF"/>
<dbReference type="SMR" id="P07695"/>
<dbReference type="GeneID" id="77440819"/>
<dbReference type="KEGG" id="vg:77440819"/>
<dbReference type="EvolutionaryTrace" id="P07695"/>
<dbReference type="Proteomes" id="UP000009092">
    <property type="component" value="Genome"/>
</dbReference>
<dbReference type="GO" id="GO:0003677">
    <property type="term" value="F:DNA binding"/>
    <property type="evidence" value="ECO:0007669"/>
    <property type="project" value="UniProtKB-KW"/>
</dbReference>
<dbReference type="Gene3D" id="6.10.200.10">
    <property type="entry name" value="Regulatory phage protein Cox"/>
    <property type="match status" value="1"/>
</dbReference>
<dbReference type="InterPro" id="IPR038147">
    <property type="entry name" value="Cox_sf"/>
</dbReference>
<dbReference type="InterPro" id="IPR019679">
    <property type="entry name" value="Phage_P2_Cox"/>
</dbReference>
<dbReference type="Pfam" id="PF10743">
    <property type="entry name" value="Phage_Cox"/>
    <property type="match status" value="1"/>
</dbReference>
<reference key="1">
    <citation type="journal article" date="1987" name="Mol. Gen. Genet.">
        <title>DNA sequences of bacteriophage P2 early genes cox and B and their regulatory sites.</title>
        <authorList>
            <person name="Haggaard-Ljungquist E."/>
            <person name="Kockum K."/>
            <person name="Bertani L.E."/>
        </authorList>
    </citation>
    <scope>NUCLEOTIDE SEQUENCE [GENOMIC DNA]</scope>
</reference>
<reference key="2">
    <citation type="journal article" date="1987" name="EMBO J.">
        <title>The cox protein of bacteriophage P2 inhibits the formation of the repressor protein and autoregulates the early operon.</title>
        <authorList>
            <person name="Saha S."/>
            <person name="Haggaard-Ljungquist E."/>
            <person name="Nordstroem K."/>
        </authorList>
    </citation>
    <scope>FUNCTION</scope>
</reference>